<reference key="1">
    <citation type="journal article" date="2004" name="Proc. Natl. Acad. Sci. U.S.A.">
        <title>Genomic plasticity of the causative agent of melioidosis, Burkholderia pseudomallei.</title>
        <authorList>
            <person name="Holden M.T.G."/>
            <person name="Titball R.W."/>
            <person name="Peacock S.J."/>
            <person name="Cerdeno-Tarraga A.-M."/>
            <person name="Atkins T."/>
            <person name="Crossman L.C."/>
            <person name="Pitt T."/>
            <person name="Churcher C."/>
            <person name="Mungall K.L."/>
            <person name="Bentley S.D."/>
            <person name="Sebaihia M."/>
            <person name="Thomson N.R."/>
            <person name="Bason N."/>
            <person name="Beacham I.R."/>
            <person name="Brooks K."/>
            <person name="Brown K.A."/>
            <person name="Brown N.F."/>
            <person name="Challis G.L."/>
            <person name="Cherevach I."/>
            <person name="Chillingworth T."/>
            <person name="Cronin A."/>
            <person name="Crossett B."/>
            <person name="Davis P."/>
            <person name="DeShazer D."/>
            <person name="Feltwell T."/>
            <person name="Fraser A."/>
            <person name="Hance Z."/>
            <person name="Hauser H."/>
            <person name="Holroyd S."/>
            <person name="Jagels K."/>
            <person name="Keith K.E."/>
            <person name="Maddison M."/>
            <person name="Moule S."/>
            <person name="Price C."/>
            <person name="Quail M.A."/>
            <person name="Rabbinowitsch E."/>
            <person name="Rutherford K."/>
            <person name="Sanders M."/>
            <person name="Simmonds M."/>
            <person name="Songsivilai S."/>
            <person name="Stevens K."/>
            <person name="Tumapa S."/>
            <person name="Vesaratchavest M."/>
            <person name="Whitehead S."/>
            <person name="Yeats C."/>
            <person name="Barrell B.G."/>
            <person name="Oyston P.C.F."/>
            <person name="Parkhill J."/>
        </authorList>
    </citation>
    <scope>NUCLEOTIDE SEQUENCE [LARGE SCALE GENOMIC DNA]</scope>
    <source>
        <strain>K96243</strain>
    </source>
</reference>
<reference key="2">
    <citation type="journal article" date="1997" name="J. Bacteriol.">
        <title>Structural studies of malate dehydrogenases (MDHs): MDHs in Brevundimonas species are the first reported MDHs in Proteobacteria which resemble lactate dehydrogenases in primary structure.</title>
        <authorList>
            <person name="Charnock C."/>
        </authorList>
    </citation>
    <scope>PROTEIN SEQUENCE OF 2-30</scope>
    <source>
        <strain>ATCC 23343</strain>
    </source>
</reference>
<proteinExistence type="evidence at protein level"/>
<gene>
    <name evidence="1" type="primary">mdh</name>
    <name type="ordered locus">BPSS1722</name>
</gene>
<protein>
    <recommendedName>
        <fullName evidence="1">Malate dehydrogenase</fullName>
        <ecNumber evidence="1">1.1.1.37</ecNumber>
    </recommendedName>
</protein>
<accession>P80536</accession>
<accession>Q63JJ4</accession>
<keyword id="KW-0903">Direct protein sequencing</keyword>
<keyword id="KW-0520">NAD</keyword>
<keyword id="KW-0560">Oxidoreductase</keyword>
<keyword id="KW-1185">Reference proteome</keyword>
<keyword id="KW-0816">Tricarboxylic acid cycle</keyword>
<feature type="initiator methionine" description="Removed" evidence="2">
    <location>
        <position position="1"/>
    </location>
</feature>
<feature type="chain" id="PRO_0000113354" description="Malate dehydrogenase">
    <location>
        <begin position="2"/>
        <end position="327"/>
    </location>
</feature>
<feature type="active site" description="Proton acceptor" evidence="1">
    <location>
        <position position="188"/>
    </location>
</feature>
<feature type="binding site" evidence="1">
    <location>
        <begin position="12"/>
        <end position="18"/>
    </location>
    <ligand>
        <name>NAD(+)</name>
        <dbReference type="ChEBI" id="CHEBI:57540"/>
    </ligand>
</feature>
<feature type="binding site" evidence="1">
    <location>
        <position position="93"/>
    </location>
    <ligand>
        <name>substrate</name>
    </ligand>
</feature>
<feature type="binding site" evidence="1">
    <location>
        <position position="99"/>
    </location>
    <ligand>
        <name>substrate</name>
    </ligand>
</feature>
<feature type="binding site" evidence="1">
    <location>
        <position position="106"/>
    </location>
    <ligand>
        <name>NAD(+)</name>
        <dbReference type="ChEBI" id="CHEBI:57540"/>
    </ligand>
</feature>
<feature type="binding site" evidence="1">
    <location>
        <position position="113"/>
    </location>
    <ligand>
        <name>NAD(+)</name>
        <dbReference type="ChEBI" id="CHEBI:57540"/>
    </ligand>
</feature>
<feature type="binding site" evidence="1">
    <location>
        <begin position="130"/>
        <end position="132"/>
    </location>
    <ligand>
        <name>NAD(+)</name>
        <dbReference type="ChEBI" id="CHEBI:57540"/>
    </ligand>
</feature>
<feature type="binding site" evidence="1">
    <location>
        <position position="132"/>
    </location>
    <ligand>
        <name>substrate</name>
    </ligand>
</feature>
<feature type="binding site" evidence="1">
    <location>
        <position position="163"/>
    </location>
    <ligand>
        <name>substrate</name>
    </ligand>
</feature>
<feature type="sequence conflict" description="In Ref. 2; AA sequence." evidence="3" ref="2">
    <original>R</original>
    <variation>K</variation>
    <location>
        <position position="24"/>
    </location>
</feature>
<feature type="sequence conflict" description="In Ref. 2; AA sequence." evidence="3" ref="2">
    <original>D</original>
    <variation>K</variation>
    <location>
        <position position="29"/>
    </location>
</feature>
<organism>
    <name type="scientific">Burkholderia pseudomallei (strain K96243)</name>
    <dbReference type="NCBI Taxonomy" id="272560"/>
    <lineage>
        <taxon>Bacteria</taxon>
        <taxon>Pseudomonadati</taxon>
        <taxon>Pseudomonadota</taxon>
        <taxon>Betaproteobacteria</taxon>
        <taxon>Burkholderiales</taxon>
        <taxon>Burkholderiaceae</taxon>
        <taxon>Burkholderia</taxon>
        <taxon>pseudomallei group</taxon>
    </lineage>
</organism>
<evidence type="ECO:0000255" key="1">
    <source>
        <dbReference type="HAMAP-Rule" id="MF_01517"/>
    </source>
</evidence>
<evidence type="ECO:0000269" key="2">
    <source>
    </source>
</evidence>
<evidence type="ECO:0000305" key="3"/>
<sequence length="327" mass="35015">MAKPAKRVAVTGAAGQIAYSLLFRIANGDLLGKDQPVILQLLDLPQAQAAVKGVVMELDDCAFPLLAGVVITDDPKVAFKDADVALLVGARPRSKGMERKDLLSANAEIFTVQGAALNEVASRDVKVLVVGNPANTNAYIAMKSAPDLPKKNFTAMLRLDHNRALSQLAAKSGKPVASIEKLAVWGNHSPTMYPDFRFATAEGESLLKLINDDVWNRDTFIPTVGKRGAAIIEARGLSSAASAANAAIDHVRDWVLGTNGKWVTMGIPSDGSYGIPEDIIYGVPVICENGEYKRVEGLEIDAFSREKMDGTLAELLEERDGVAHLLK</sequence>
<comment type="function">
    <text evidence="1">Catalyzes the reversible oxidation of malate to oxaloacetate.</text>
</comment>
<comment type="catalytic activity">
    <reaction evidence="1">
        <text>(S)-malate + NAD(+) = oxaloacetate + NADH + H(+)</text>
        <dbReference type="Rhea" id="RHEA:21432"/>
        <dbReference type="ChEBI" id="CHEBI:15378"/>
        <dbReference type="ChEBI" id="CHEBI:15589"/>
        <dbReference type="ChEBI" id="CHEBI:16452"/>
        <dbReference type="ChEBI" id="CHEBI:57540"/>
        <dbReference type="ChEBI" id="CHEBI:57945"/>
        <dbReference type="EC" id="1.1.1.37"/>
    </reaction>
</comment>
<comment type="similarity">
    <text evidence="1">Belongs to the LDH/MDH superfamily. MDH type 2 family.</text>
</comment>
<name>MDH_BURPS</name>
<dbReference type="EC" id="1.1.1.37" evidence="1"/>
<dbReference type="EMBL" id="BX571966">
    <property type="protein sequence ID" value="CAH39196.1"/>
    <property type="molecule type" value="Genomic_DNA"/>
</dbReference>
<dbReference type="RefSeq" id="WP_004187735.1">
    <property type="nucleotide sequence ID" value="NZ_CP009537.1"/>
</dbReference>
<dbReference type="RefSeq" id="YP_111728.1">
    <property type="nucleotide sequence ID" value="NC_006351.1"/>
</dbReference>
<dbReference type="SMR" id="P80536"/>
<dbReference type="STRING" id="272560.BPSS1722"/>
<dbReference type="KEGG" id="bps:BPSS1722"/>
<dbReference type="PATRIC" id="fig|272560.51.peg.5139"/>
<dbReference type="eggNOG" id="COG0039">
    <property type="taxonomic scope" value="Bacteria"/>
</dbReference>
<dbReference type="Proteomes" id="UP000000605">
    <property type="component" value="Chromosome 2"/>
</dbReference>
<dbReference type="GO" id="GO:0030060">
    <property type="term" value="F:L-malate dehydrogenase (NAD+) activity"/>
    <property type="evidence" value="ECO:0007669"/>
    <property type="project" value="UniProtKB-UniRule"/>
</dbReference>
<dbReference type="GO" id="GO:0006108">
    <property type="term" value="P:malate metabolic process"/>
    <property type="evidence" value="ECO:0007669"/>
    <property type="project" value="InterPro"/>
</dbReference>
<dbReference type="GO" id="GO:0006099">
    <property type="term" value="P:tricarboxylic acid cycle"/>
    <property type="evidence" value="ECO:0007669"/>
    <property type="project" value="UniProtKB-UniRule"/>
</dbReference>
<dbReference type="CDD" id="cd01338">
    <property type="entry name" value="MDH_chloroplast-like"/>
    <property type="match status" value="1"/>
</dbReference>
<dbReference type="FunFam" id="3.40.50.720:FF:000010">
    <property type="entry name" value="Malate dehydrogenase"/>
    <property type="match status" value="1"/>
</dbReference>
<dbReference type="FunFam" id="3.90.110.10:FF:000002">
    <property type="entry name" value="Malate dehydrogenase"/>
    <property type="match status" value="1"/>
</dbReference>
<dbReference type="Gene3D" id="3.90.110.10">
    <property type="entry name" value="Lactate dehydrogenase/glycoside hydrolase, family 4, C-terminal"/>
    <property type="match status" value="1"/>
</dbReference>
<dbReference type="Gene3D" id="3.40.50.720">
    <property type="entry name" value="NAD(P)-binding Rossmann-like Domain"/>
    <property type="match status" value="1"/>
</dbReference>
<dbReference type="HAMAP" id="MF_01517">
    <property type="entry name" value="Malate_dehydrog_2"/>
    <property type="match status" value="1"/>
</dbReference>
<dbReference type="InterPro" id="IPR001557">
    <property type="entry name" value="L-lactate/malate_DH"/>
</dbReference>
<dbReference type="InterPro" id="IPR022383">
    <property type="entry name" value="Lactate/malate_DH_C"/>
</dbReference>
<dbReference type="InterPro" id="IPR001236">
    <property type="entry name" value="Lactate/malate_DH_N"/>
</dbReference>
<dbReference type="InterPro" id="IPR015955">
    <property type="entry name" value="Lactate_DH/Glyco_Ohase_4_C"/>
</dbReference>
<dbReference type="InterPro" id="IPR010945">
    <property type="entry name" value="Malate_DH_type2"/>
</dbReference>
<dbReference type="InterPro" id="IPR036291">
    <property type="entry name" value="NAD(P)-bd_dom_sf"/>
</dbReference>
<dbReference type="NCBIfam" id="TIGR01759">
    <property type="entry name" value="MalateDH-SF1"/>
    <property type="match status" value="1"/>
</dbReference>
<dbReference type="NCBIfam" id="NF003916">
    <property type="entry name" value="PRK05442.1"/>
    <property type="match status" value="1"/>
</dbReference>
<dbReference type="PANTHER" id="PTHR23382">
    <property type="entry name" value="MALATE DEHYDROGENASE"/>
    <property type="match status" value="1"/>
</dbReference>
<dbReference type="Pfam" id="PF02866">
    <property type="entry name" value="Ldh_1_C"/>
    <property type="match status" value="1"/>
</dbReference>
<dbReference type="Pfam" id="PF00056">
    <property type="entry name" value="Ldh_1_N"/>
    <property type="match status" value="1"/>
</dbReference>
<dbReference type="PIRSF" id="PIRSF000102">
    <property type="entry name" value="Lac_mal_DH"/>
    <property type="match status" value="1"/>
</dbReference>
<dbReference type="SUPFAM" id="SSF56327">
    <property type="entry name" value="LDH C-terminal domain-like"/>
    <property type="match status" value="1"/>
</dbReference>
<dbReference type="SUPFAM" id="SSF51735">
    <property type="entry name" value="NAD(P)-binding Rossmann-fold domains"/>
    <property type="match status" value="1"/>
</dbReference>